<evidence type="ECO:0000255" key="1">
    <source>
        <dbReference type="HAMAP-Rule" id="MF_02113"/>
    </source>
</evidence>
<organism>
    <name type="scientific">Methanoculleus marisnigri (strain ATCC 35101 / DSM 1498 / JR1)</name>
    <dbReference type="NCBI Taxonomy" id="368407"/>
    <lineage>
        <taxon>Archaea</taxon>
        <taxon>Methanobacteriati</taxon>
        <taxon>Methanobacteriota</taxon>
        <taxon>Stenosarchaea group</taxon>
        <taxon>Methanomicrobia</taxon>
        <taxon>Methanomicrobiales</taxon>
        <taxon>Methanomicrobiaceae</taxon>
        <taxon>Methanoculleus</taxon>
    </lineage>
</organism>
<name>PSB_METMJ</name>
<proteinExistence type="inferred from homology"/>
<reference key="1">
    <citation type="journal article" date="2009" name="Stand. Genomic Sci.">
        <title>Complete genome sequence of Methanoculleus marisnigri Romesser et al. 1981 type strain JR1.</title>
        <authorList>
            <person name="Anderson I.J."/>
            <person name="Sieprawska-Lupa M."/>
            <person name="Lapidus A."/>
            <person name="Nolan M."/>
            <person name="Copeland A."/>
            <person name="Glavina Del Rio T."/>
            <person name="Tice H."/>
            <person name="Dalin E."/>
            <person name="Barry K."/>
            <person name="Saunders E."/>
            <person name="Han C."/>
            <person name="Brettin T."/>
            <person name="Detter J.C."/>
            <person name="Bruce D."/>
            <person name="Mikhailova N."/>
            <person name="Pitluck S."/>
            <person name="Hauser L."/>
            <person name="Land M."/>
            <person name="Lucas S."/>
            <person name="Richardson P."/>
            <person name="Whitman W.B."/>
            <person name="Kyrpides N.C."/>
        </authorList>
    </citation>
    <scope>NUCLEOTIDE SEQUENCE [LARGE SCALE GENOMIC DNA]</scope>
    <source>
        <strain>ATCC 35101 / DSM 1498 / JR1</strain>
    </source>
</reference>
<feature type="propeptide" id="PRO_0000397358" description="Removed in mature form; by autocatalysis" evidence="1">
    <location>
        <begin position="1"/>
        <end position="11"/>
    </location>
</feature>
<feature type="chain" id="PRO_0000397359" description="Proteasome subunit beta">
    <location>
        <begin position="12"/>
        <end position="214"/>
    </location>
</feature>
<feature type="active site" description="Nucleophile" evidence="1">
    <location>
        <position position="12"/>
    </location>
</feature>
<dbReference type="EC" id="3.4.25.1" evidence="1"/>
<dbReference type="EMBL" id="CP000562">
    <property type="protein sequence ID" value="ABN57129.1"/>
    <property type="molecule type" value="Genomic_DNA"/>
</dbReference>
<dbReference type="RefSeq" id="WP_011844040.1">
    <property type="nucleotide sequence ID" value="NC_009051.1"/>
</dbReference>
<dbReference type="SMR" id="A3CUS9"/>
<dbReference type="STRING" id="368407.Memar_1198"/>
<dbReference type="MEROPS" id="T01.002"/>
<dbReference type="GeneID" id="4848419"/>
<dbReference type="GeneID" id="76729268"/>
<dbReference type="KEGG" id="mem:Memar_1198"/>
<dbReference type="eggNOG" id="arCOG00970">
    <property type="taxonomic scope" value="Archaea"/>
</dbReference>
<dbReference type="HOGENOM" id="CLU_035750_7_2_2"/>
<dbReference type="OrthoDB" id="6330at2157"/>
<dbReference type="Proteomes" id="UP000002146">
    <property type="component" value="Chromosome"/>
</dbReference>
<dbReference type="GO" id="GO:0005737">
    <property type="term" value="C:cytoplasm"/>
    <property type="evidence" value="ECO:0007669"/>
    <property type="project" value="UniProtKB-SubCell"/>
</dbReference>
<dbReference type="GO" id="GO:0019774">
    <property type="term" value="C:proteasome core complex, beta-subunit complex"/>
    <property type="evidence" value="ECO:0007669"/>
    <property type="project" value="UniProtKB-UniRule"/>
</dbReference>
<dbReference type="GO" id="GO:0004298">
    <property type="term" value="F:threonine-type endopeptidase activity"/>
    <property type="evidence" value="ECO:0007669"/>
    <property type="project" value="UniProtKB-UniRule"/>
</dbReference>
<dbReference type="GO" id="GO:0010498">
    <property type="term" value="P:proteasomal protein catabolic process"/>
    <property type="evidence" value="ECO:0007669"/>
    <property type="project" value="UniProtKB-UniRule"/>
</dbReference>
<dbReference type="CDD" id="cd03764">
    <property type="entry name" value="proteasome_beta_archeal"/>
    <property type="match status" value="1"/>
</dbReference>
<dbReference type="FunFam" id="3.60.20.10:FF:000049">
    <property type="entry name" value="Proteasome subunit beta"/>
    <property type="match status" value="1"/>
</dbReference>
<dbReference type="Gene3D" id="3.60.20.10">
    <property type="entry name" value="Glutamine Phosphoribosylpyrophosphate, subunit 1, domain 1"/>
    <property type="match status" value="1"/>
</dbReference>
<dbReference type="HAMAP" id="MF_02113_A">
    <property type="entry name" value="Proteasome_B_A"/>
    <property type="match status" value="1"/>
</dbReference>
<dbReference type="InterPro" id="IPR029055">
    <property type="entry name" value="Ntn_hydrolases_N"/>
</dbReference>
<dbReference type="InterPro" id="IPR019983">
    <property type="entry name" value="Pept_T1A_Psome_bsu_arc"/>
</dbReference>
<dbReference type="InterPro" id="IPR000243">
    <property type="entry name" value="Pept_T1A_subB"/>
</dbReference>
<dbReference type="InterPro" id="IPR016050">
    <property type="entry name" value="Proteasome_bsu_CS"/>
</dbReference>
<dbReference type="InterPro" id="IPR001353">
    <property type="entry name" value="Proteasome_sua/b"/>
</dbReference>
<dbReference type="InterPro" id="IPR023333">
    <property type="entry name" value="Proteasome_suB-type"/>
</dbReference>
<dbReference type="NCBIfam" id="TIGR03634">
    <property type="entry name" value="arc_protsome_B"/>
    <property type="match status" value="1"/>
</dbReference>
<dbReference type="PANTHER" id="PTHR32194:SF0">
    <property type="entry name" value="ATP-DEPENDENT PROTEASE SUBUNIT HSLV"/>
    <property type="match status" value="1"/>
</dbReference>
<dbReference type="PANTHER" id="PTHR32194">
    <property type="entry name" value="METALLOPROTEASE TLDD"/>
    <property type="match status" value="1"/>
</dbReference>
<dbReference type="Pfam" id="PF00227">
    <property type="entry name" value="Proteasome"/>
    <property type="match status" value="1"/>
</dbReference>
<dbReference type="PRINTS" id="PR00141">
    <property type="entry name" value="PROTEASOME"/>
</dbReference>
<dbReference type="SUPFAM" id="SSF56235">
    <property type="entry name" value="N-terminal nucleophile aminohydrolases (Ntn hydrolases)"/>
    <property type="match status" value="1"/>
</dbReference>
<dbReference type="PROSITE" id="PS00854">
    <property type="entry name" value="PROTEASOME_BETA_1"/>
    <property type="match status" value="1"/>
</dbReference>
<dbReference type="PROSITE" id="PS51476">
    <property type="entry name" value="PROTEASOME_BETA_2"/>
    <property type="match status" value="1"/>
</dbReference>
<accession>A3CUS9</accession>
<protein>
    <recommendedName>
        <fullName evidence="1">Proteasome subunit beta</fullName>
        <ecNumber evidence="1">3.4.25.1</ecNumber>
    </recommendedName>
    <alternativeName>
        <fullName evidence="1">20S proteasome beta subunit</fullName>
    </alternativeName>
    <alternativeName>
        <fullName evidence="1">Proteasome core protein PsmB</fullName>
    </alternativeName>
</protein>
<gene>
    <name evidence="1" type="primary">psmB</name>
    <name type="ordered locus">Memar_1198</name>
</gene>
<sequence>MLDTSQEIMKGTTTVGLIFDGGVVLATEMRATMGNMIASKRAKKIYQITPRIGLTTAGGVGDAQQLVRILQVECNLFEMRRGKTMSVGAASTLLSNYLNQNRYYPYYVQLLMGGFDDEGPSVYSVDAMGGATKEEDIVATGSGSPFAYGVLEDQYRAGMKEDDAKDLAVRAVRSAMRRDSASGEDIMVVVITKDKYEEHIESGLQRPSAARPTL</sequence>
<keyword id="KW-0068">Autocatalytic cleavage</keyword>
<keyword id="KW-0963">Cytoplasm</keyword>
<keyword id="KW-0378">Hydrolase</keyword>
<keyword id="KW-0645">Protease</keyword>
<keyword id="KW-0647">Proteasome</keyword>
<keyword id="KW-0888">Threonine protease</keyword>
<keyword id="KW-0865">Zymogen</keyword>
<comment type="function">
    <text evidence="1">Component of the proteasome core, a large protease complex with broad specificity involved in protein degradation.</text>
</comment>
<comment type="catalytic activity">
    <reaction evidence="1">
        <text>Cleavage of peptide bonds with very broad specificity.</text>
        <dbReference type="EC" id="3.4.25.1"/>
    </reaction>
</comment>
<comment type="activity regulation">
    <text evidence="1">The formation of the proteasomal ATPase PAN-20S proteasome complex, via the docking of the C-termini of PAN into the intersubunit pockets in the alpha-rings, triggers opening of the gate for substrate entry. Interconversion between the open-gate and close-gate conformations leads to a dynamic regulation of the 20S proteasome proteolysis activity.</text>
</comment>
<comment type="subunit">
    <text evidence="1">The 20S proteasome core is composed of 14 alpha and 14 beta subunits that assemble into four stacked heptameric rings, resulting in a barrel-shaped structure. The two inner rings, each composed of seven catalytic beta subunits, are sandwiched by two outer rings, each composed of seven alpha subunits. The catalytic chamber with the active sites is on the inside of the barrel. Has a gated structure, the ends of the cylinder being occluded by the N-termini of the alpha-subunits. Is capped at one or both ends by the proteasome regulatory ATPase, PAN.</text>
</comment>
<comment type="subcellular location">
    <subcellularLocation>
        <location evidence="1">Cytoplasm</location>
    </subcellularLocation>
</comment>
<comment type="similarity">
    <text evidence="1">Belongs to the peptidase T1B family.</text>
</comment>